<reference key="1">
    <citation type="journal article" date="2004" name="Nature">
        <title>The sequence and analysis of duplication-rich human chromosome 16.</title>
        <authorList>
            <person name="Martin J."/>
            <person name="Han C."/>
            <person name="Gordon L.A."/>
            <person name="Terry A."/>
            <person name="Prabhakar S."/>
            <person name="She X."/>
            <person name="Xie G."/>
            <person name="Hellsten U."/>
            <person name="Chan Y.M."/>
            <person name="Altherr M."/>
            <person name="Couronne O."/>
            <person name="Aerts A."/>
            <person name="Bajorek E."/>
            <person name="Black S."/>
            <person name="Blumer H."/>
            <person name="Branscomb E."/>
            <person name="Brown N.C."/>
            <person name="Bruno W.J."/>
            <person name="Buckingham J.M."/>
            <person name="Callen D.F."/>
            <person name="Campbell C.S."/>
            <person name="Campbell M.L."/>
            <person name="Campbell E.W."/>
            <person name="Caoile C."/>
            <person name="Challacombe J.F."/>
            <person name="Chasteen L.A."/>
            <person name="Chertkov O."/>
            <person name="Chi H.C."/>
            <person name="Christensen M."/>
            <person name="Clark L.M."/>
            <person name="Cohn J.D."/>
            <person name="Denys M."/>
            <person name="Detter J.C."/>
            <person name="Dickson M."/>
            <person name="Dimitrijevic-Bussod M."/>
            <person name="Escobar J."/>
            <person name="Fawcett J.J."/>
            <person name="Flowers D."/>
            <person name="Fotopulos D."/>
            <person name="Glavina T."/>
            <person name="Gomez M."/>
            <person name="Gonzales E."/>
            <person name="Goodstein D."/>
            <person name="Goodwin L.A."/>
            <person name="Grady D.L."/>
            <person name="Grigoriev I."/>
            <person name="Groza M."/>
            <person name="Hammon N."/>
            <person name="Hawkins T."/>
            <person name="Haydu L."/>
            <person name="Hildebrand C.E."/>
            <person name="Huang W."/>
            <person name="Israni S."/>
            <person name="Jett J."/>
            <person name="Jewett P.B."/>
            <person name="Kadner K."/>
            <person name="Kimball H."/>
            <person name="Kobayashi A."/>
            <person name="Krawczyk M.-C."/>
            <person name="Leyba T."/>
            <person name="Longmire J.L."/>
            <person name="Lopez F."/>
            <person name="Lou Y."/>
            <person name="Lowry S."/>
            <person name="Ludeman T."/>
            <person name="Manohar C.F."/>
            <person name="Mark G.A."/>
            <person name="McMurray K.L."/>
            <person name="Meincke L.J."/>
            <person name="Morgan J."/>
            <person name="Moyzis R.K."/>
            <person name="Mundt M.O."/>
            <person name="Munk A.C."/>
            <person name="Nandkeshwar R.D."/>
            <person name="Pitluck S."/>
            <person name="Pollard M."/>
            <person name="Predki P."/>
            <person name="Parson-Quintana B."/>
            <person name="Ramirez L."/>
            <person name="Rash S."/>
            <person name="Retterer J."/>
            <person name="Ricke D.O."/>
            <person name="Robinson D.L."/>
            <person name="Rodriguez A."/>
            <person name="Salamov A."/>
            <person name="Saunders E.H."/>
            <person name="Scott D."/>
            <person name="Shough T."/>
            <person name="Stallings R.L."/>
            <person name="Stalvey M."/>
            <person name="Sutherland R.D."/>
            <person name="Tapia R."/>
            <person name="Tesmer J.G."/>
            <person name="Thayer N."/>
            <person name="Thompson L.S."/>
            <person name="Tice H."/>
            <person name="Torney D.C."/>
            <person name="Tran-Gyamfi M."/>
            <person name="Tsai M."/>
            <person name="Ulanovsky L.E."/>
            <person name="Ustaszewska A."/>
            <person name="Vo N."/>
            <person name="White P.S."/>
            <person name="Williams A.L."/>
            <person name="Wills P.L."/>
            <person name="Wu J.-R."/>
            <person name="Wu K."/>
            <person name="Yang J."/>
            <person name="DeJong P."/>
            <person name="Bruce D."/>
            <person name="Doggett N.A."/>
            <person name="Deaven L."/>
            <person name="Schmutz J."/>
            <person name="Grimwood J."/>
            <person name="Richardson P."/>
            <person name="Rokhsar D.S."/>
            <person name="Eichler E.E."/>
            <person name="Gilna P."/>
            <person name="Lucas S.M."/>
            <person name="Myers R.M."/>
            <person name="Rubin E.M."/>
            <person name="Pennacchio L.A."/>
        </authorList>
    </citation>
    <scope>NUCLEOTIDE SEQUENCE [LARGE SCALE GENOMIC DNA]</scope>
</reference>
<comment type="similarity">
    <text evidence="2">Belongs to the NPIP family.</text>
</comment>
<proteinExistence type="inferred from homology"/>
<evidence type="ECO:0000256" key="1">
    <source>
        <dbReference type="SAM" id="MobiDB-lite"/>
    </source>
</evidence>
<evidence type="ECO:0000305" key="2"/>
<keyword id="KW-1185">Reference proteome</keyword>
<organism>
    <name type="scientific">Homo sapiens</name>
    <name type="common">Human</name>
    <dbReference type="NCBI Taxonomy" id="9606"/>
    <lineage>
        <taxon>Eukaryota</taxon>
        <taxon>Metazoa</taxon>
        <taxon>Chordata</taxon>
        <taxon>Craniata</taxon>
        <taxon>Vertebrata</taxon>
        <taxon>Euteleostomi</taxon>
        <taxon>Mammalia</taxon>
        <taxon>Eutheria</taxon>
        <taxon>Euarchontoglires</taxon>
        <taxon>Primates</taxon>
        <taxon>Haplorrhini</taxon>
        <taxon>Catarrhini</taxon>
        <taxon>Hominidae</taxon>
        <taxon>Homo</taxon>
    </lineage>
</organism>
<name>NPIA3_HUMAN</name>
<accession>F8WFD2</accession>
<dbReference type="EMBL" id="AC009167">
    <property type="status" value="NOT_ANNOTATED_CDS"/>
    <property type="molecule type" value="Genomic_DNA"/>
</dbReference>
<dbReference type="EMBL" id="AC136443">
    <property type="status" value="NOT_ANNOTATED_CDS"/>
    <property type="molecule type" value="Genomic_DNA"/>
</dbReference>
<dbReference type="CCDS" id="CCDS59262.1"/>
<dbReference type="RefSeq" id="NP_001264252.1">
    <property type="nucleotide sequence ID" value="NM_001277323.2"/>
</dbReference>
<dbReference type="RefSeq" id="XP_005255541.1">
    <property type="nucleotide sequence ID" value="XM_005255484.3"/>
</dbReference>
<dbReference type="RefSeq" id="XP_047290424.1">
    <property type="nucleotide sequence ID" value="XM_047434468.1"/>
</dbReference>
<dbReference type="SMR" id="F8WFD2"/>
<dbReference type="BioGRID" id="568253">
    <property type="interactions" value="1"/>
</dbReference>
<dbReference type="FunCoup" id="F8WFD2">
    <property type="interactions" value="39"/>
</dbReference>
<dbReference type="STRING" id="9606.ENSP00000446882"/>
<dbReference type="GlyGen" id="F8WFD2">
    <property type="glycosylation" value="1 site"/>
</dbReference>
<dbReference type="iPTMnet" id="F8WFD2"/>
<dbReference type="PhosphoSitePlus" id="F8WFD2"/>
<dbReference type="BioMuta" id="NPIPA3"/>
<dbReference type="MassIVE" id="F8WFD2"/>
<dbReference type="PaxDb" id="9606-ENSP00000446882"/>
<dbReference type="PeptideAtlas" id="F8WFD2"/>
<dbReference type="Antibodypedia" id="77232">
    <property type="antibodies" value="2 antibodies from 2 providers"/>
</dbReference>
<dbReference type="Ensembl" id="ENST00000552140.6">
    <property type="protein sequence ID" value="ENSP00000448841.1"/>
    <property type="gene ID" value="ENSG00000224712.13"/>
</dbReference>
<dbReference type="GeneID" id="642778"/>
<dbReference type="KEGG" id="hsa:642778"/>
<dbReference type="UCSC" id="uc002dcr.5">
    <property type="organism name" value="human"/>
</dbReference>
<dbReference type="AGR" id="HGNC:41978"/>
<dbReference type="CTD" id="642778"/>
<dbReference type="GeneCards" id="NPIPA3"/>
<dbReference type="HGNC" id="HGNC:41978">
    <property type="gene designation" value="NPIPA3"/>
</dbReference>
<dbReference type="HPA" id="ENSG00000224712">
    <property type="expression patterns" value="Tissue enhanced (brain)"/>
</dbReference>
<dbReference type="neXtProt" id="NX_F8WFD2"/>
<dbReference type="VEuPathDB" id="HostDB:ENSG00000224712"/>
<dbReference type="eggNOG" id="ENOG502R1NR">
    <property type="taxonomic scope" value="Eukaryota"/>
</dbReference>
<dbReference type="GeneTree" id="ENSGT00540000072033"/>
<dbReference type="InParanoid" id="F8WFD2"/>
<dbReference type="OrthoDB" id="6614653at2759"/>
<dbReference type="PAN-GO" id="F8WFD2">
    <property type="GO annotations" value="1 GO annotation based on evolutionary models"/>
</dbReference>
<dbReference type="PathwayCommons" id="F8WFD2"/>
<dbReference type="BioGRID-ORCS" id="642778">
    <property type="hits" value="29 hits in 199 CRISPR screens"/>
</dbReference>
<dbReference type="ChiTaRS" id="NPIPA3">
    <property type="organism name" value="human"/>
</dbReference>
<dbReference type="GenomeRNAi" id="642778"/>
<dbReference type="Pharos" id="F8WFD2">
    <property type="development level" value="Tdark"/>
</dbReference>
<dbReference type="PRO" id="PR:F8WFD2"/>
<dbReference type="Proteomes" id="UP000005640">
    <property type="component" value="Chromosome 16"/>
</dbReference>
<dbReference type="RNAct" id="F8WFD2">
    <property type="molecule type" value="protein"/>
</dbReference>
<dbReference type="Bgee" id="ENSG00000224712">
    <property type="expression patterns" value="Expressed in cerebellum and 100 other cell types or tissues"/>
</dbReference>
<dbReference type="ExpressionAtlas" id="F8WFD2">
    <property type="expression patterns" value="baseline and differential"/>
</dbReference>
<dbReference type="InterPro" id="IPR009443">
    <property type="entry name" value="NPIP"/>
</dbReference>
<dbReference type="InterPro" id="IPR054697">
    <property type="entry name" value="NPIP_N"/>
</dbReference>
<dbReference type="PANTHER" id="PTHR15438">
    <property type="entry name" value="NUCLEAR PORE COMPLEX INTERACTING PROTEIN"/>
    <property type="match status" value="1"/>
</dbReference>
<dbReference type="PANTHER" id="PTHR15438:SF5">
    <property type="entry name" value="NUCLEAR PORE COMPLEX-INTERACTING PROTEIN FAMILY MEMBER A2-RELATED"/>
    <property type="match status" value="1"/>
</dbReference>
<dbReference type="Pfam" id="PF06409">
    <property type="entry name" value="NPIP"/>
    <property type="match status" value="1"/>
</dbReference>
<feature type="chain" id="PRO_0000423917" description="Nuclear pore complex-interacting protein family member A3">
    <location>
        <begin position="1"/>
        <end position="350"/>
    </location>
</feature>
<feature type="region of interest" description="Disordered" evidence="1">
    <location>
        <begin position="306"/>
        <end position="325"/>
    </location>
</feature>
<protein>
    <recommendedName>
        <fullName>Nuclear pore complex-interacting protein family member A3</fullName>
    </recommendedName>
</protein>
<gene>
    <name type="primary">NPIPA3</name>
</gene>
<sequence>MFCCLGYEWLSGGCKTWHSAWVINTLADHRHRGTDFGGSPWLLIITVFLRSYKFAISLCTSYLCVSFLKTIFPSQNGHDGSTDVQQRARRSNRRRQEGIKIVLEDIFTLWRQVETKVRAKICKMKVTTKVNRHDKINGKRKTAKEHLRKLSMKEREHGEKERQVSEAEENGKLDMKEIHTYMEMFQRAQALRRRAEDYYRCKITPSARKPLCNRVRMAAAEHRHSSGLPYWPYLTAETLKNRMGHQPPPPTQQHSIIDNSLSLKTPPECLLTPLPPSALPSADDNLKTPAECLLYPLPPSADDNLKTPPECLLTPLPPSAPPSVDDNLKTPPKCVCSLPFHPQRMIISRN</sequence>